<feature type="chain" id="PRO_0000285295" description="Coiled-coil domain-containing protein 73">
    <location>
        <begin position="1"/>
        <end position="1066"/>
    </location>
</feature>
<feature type="region of interest" description="Disordered" evidence="2">
    <location>
        <begin position="568"/>
        <end position="600"/>
    </location>
</feature>
<feature type="region of interest" description="Disordered" evidence="2">
    <location>
        <begin position="719"/>
        <end position="811"/>
    </location>
</feature>
<feature type="region of interest" description="Disordered" evidence="2">
    <location>
        <begin position="854"/>
        <end position="883"/>
    </location>
</feature>
<feature type="region of interest" description="Disordered" evidence="2">
    <location>
        <begin position="944"/>
        <end position="978"/>
    </location>
</feature>
<feature type="region of interest" description="Disordered" evidence="2">
    <location>
        <begin position="1003"/>
        <end position="1027"/>
    </location>
</feature>
<feature type="coiled-coil region" evidence="1">
    <location>
        <begin position="47"/>
        <end position="134"/>
    </location>
</feature>
<feature type="coiled-coil region" evidence="1">
    <location>
        <begin position="178"/>
        <end position="391"/>
    </location>
</feature>
<feature type="compositionally biased region" description="Polar residues" evidence="2">
    <location>
        <begin position="591"/>
        <end position="600"/>
    </location>
</feature>
<feature type="compositionally biased region" description="Polar residues" evidence="2">
    <location>
        <begin position="742"/>
        <end position="781"/>
    </location>
</feature>
<feature type="compositionally biased region" description="Polar residues" evidence="2">
    <location>
        <begin position="789"/>
        <end position="811"/>
    </location>
</feature>
<feature type="compositionally biased region" description="Polar residues" evidence="2">
    <location>
        <begin position="857"/>
        <end position="869"/>
    </location>
</feature>
<feature type="compositionally biased region" description="Polar residues" evidence="2">
    <location>
        <begin position="948"/>
        <end position="964"/>
    </location>
</feature>
<feature type="compositionally biased region" description="Basic and acidic residues" evidence="2">
    <location>
        <begin position="967"/>
        <end position="978"/>
    </location>
</feature>
<feature type="compositionally biased region" description="Polar residues" evidence="2">
    <location>
        <begin position="1003"/>
        <end position="1013"/>
    </location>
</feature>
<feature type="sequence conflict" description="In Ref. 2; AAH95976." evidence="3" ref="2">
    <original>S</original>
    <variation>P</variation>
    <location>
        <position position="367"/>
    </location>
</feature>
<feature type="sequence conflict" description="In Ref. 2; AAH95976." evidence="3" ref="2">
    <original>T</original>
    <variation>A</variation>
    <location>
        <position position="615"/>
    </location>
</feature>
<evidence type="ECO:0000255" key="1"/>
<evidence type="ECO:0000256" key="2">
    <source>
        <dbReference type="SAM" id="MobiDB-lite"/>
    </source>
</evidence>
<evidence type="ECO:0000305" key="3"/>
<comment type="sequence caution" evidence="3">
    <conflict type="erroneous initiation">
        <sequence resource="EMBL-CDS" id="BAC26648"/>
    </conflict>
</comment>
<keyword id="KW-0175">Coiled coil</keyword>
<keyword id="KW-1185">Reference proteome</keyword>
<accession>Q8CDM4</accession>
<accession>A2A6Z9</accession>
<accession>Q501M4</accession>
<proteinExistence type="evidence at transcript level"/>
<name>CCD73_MOUSE</name>
<reference key="1">
    <citation type="journal article" date="2009" name="PLoS Biol.">
        <title>Lineage-specific biology revealed by a finished genome assembly of the mouse.</title>
        <authorList>
            <person name="Church D.M."/>
            <person name="Goodstadt L."/>
            <person name="Hillier L.W."/>
            <person name="Zody M.C."/>
            <person name="Goldstein S."/>
            <person name="She X."/>
            <person name="Bult C.J."/>
            <person name="Agarwala R."/>
            <person name="Cherry J.L."/>
            <person name="DiCuccio M."/>
            <person name="Hlavina W."/>
            <person name="Kapustin Y."/>
            <person name="Meric P."/>
            <person name="Maglott D."/>
            <person name="Birtle Z."/>
            <person name="Marques A.C."/>
            <person name="Graves T."/>
            <person name="Zhou S."/>
            <person name="Teague B."/>
            <person name="Potamousis K."/>
            <person name="Churas C."/>
            <person name="Place M."/>
            <person name="Herschleb J."/>
            <person name="Runnheim R."/>
            <person name="Forrest D."/>
            <person name="Amos-Landgraf J."/>
            <person name="Schwartz D.C."/>
            <person name="Cheng Z."/>
            <person name="Lindblad-Toh K."/>
            <person name="Eichler E.E."/>
            <person name="Ponting C.P."/>
        </authorList>
    </citation>
    <scope>NUCLEOTIDE SEQUENCE [LARGE SCALE GENOMIC DNA]</scope>
    <source>
        <strain>C57BL/6J</strain>
    </source>
</reference>
<reference key="2">
    <citation type="journal article" date="2004" name="Genome Res.">
        <title>The status, quality, and expansion of the NIH full-length cDNA project: the Mammalian Gene Collection (MGC).</title>
        <authorList>
            <consortium name="The MGC Project Team"/>
        </authorList>
    </citation>
    <scope>NUCLEOTIDE SEQUENCE [LARGE SCALE MRNA] OF 27-661</scope>
    <source>
        <strain>C57BL/6J</strain>
        <tissue>Egg</tissue>
    </source>
</reference>
<reference key="3">
    <citation type="journal article" date="2005" name="Science">
        <title>The transcriptional landscape of the mammalian genome.</title>
        <authorList>
            <person name="Carninci P."/>
            <person name="Kasukawa T."/>
            <person name="Katayama S."/>
            <person name="Gough J."/>
            <person name="Frith M.C."/>
            <person name="Maeda N."/>
            <person name="Oyama R."/>
            <person name="Ravasi T."/>
            <person name="Lenhard B."/>
            <person name="Wells C."/>
            <person name="Kodzius R."/>
            <person name="Shimokawa K."/>
            <person name="Bajic V.B."/>
            <person name="Brenner S.E."/>
            <person name="Batalov S."/>
            <person name="Forrest A.R."/>
            <person name="Zavolan M."/>
            <person name="Davis M.J."/>
            <person name="Wilming L.G."/>
            <person name="Aidinis V."/>
            <person name="Allen J.E."/>
            <person name="Ambesi-Impiombato A."/>
            <person name="Apweiler R."/>
            <person name="Aturaliya R.N."/>
            <person name="Bailey T.L."/>
            <person name="Bansal M."/>
            <person name="Baxter L."/>
            <person name="Beisel K.W."/>
            <person name="Bersano T."/>
            <person name="Bono H."/>
            <person name="Chalk A.M."/>
            <person name="Chiu K.P."/>
            <person name="Choudhary V."/>
            <person name="Christoffels A."/>
            <person name="Clutterbuck D.R."/>
            <person name="Crowe M.L."/>
            <person name="Dalla E."/>
            <person name="Dalrymple B.P."/>
            <person name="de Bono B."/>
            <person name="Della Gatta G."/>
            <person name="di Bernardo D."/>
            <person name="Down T."/>
            <person name="Engstrom P."/>
            <person name="Fagiolini M."/>
            <person name="Faulkner G."/>
            <person name="Fletcher C.F."/>
            <person name="Fukushima T."/>
            <person name="Furuno M."/>
            <person name="Futaki S."/>
            <person name="Gariboldi M."/>
            <person name="Georgii-Hemming P."/>
            <person name="Gingeras T.R."/>
            <person name="Gojobori T."/>
            <person name="Green R.E."/>
            <person name="Gustincich S."/>
            <person name="Harbers M."/>
            <person name="Hayashi Y."/>
            <person name="Hensch T.K."/>
            <person name="Hirokawa N."/>
            <person name="Hill D."/>
            <person name="Huminiecki L."/>
            <person name="Iacono M."/>
            <person name="Ikeo K."/>
            <person name="Iwama A."/>
            <person name="Ishikawa T."/>
            <person name="Jakt M."/>
            <person name="Kanapin A."/>
            <person name="Katoh M."/>
            <person name="Kawasawa Y."/>
            <person name="Kelso J."/>
            <person name="Kitamura H."/>
            <person name="Kitano H."/>
            <person name="Kollias G."/>
            <person name="Krishnan S.P."/>
            <person name="Kruger A."/>
            <person name="Kummerfeld S.K."/>
            <person name="Kurochkin I.V."/>
            <person name="Lareau L.F."/>
            <person name="Lazarevic D."/>
            <person name="Lipovich L."/>
            <person name="Liu J."/>
            <person name="Liuni S."/>
            <person name="McWilliam S."/>
            <person name="Madan Babu M."/>
            <person name="Madera M."/>
            <person name="Marchionni L."/>
            <person name="Matsuda H."/>
            <person name="Matsuzawa S."/>
            <person name="Miki H."/>
            <person name="Mignone F."/>
            <person name="Miyake S."/>
            <person name="Morris K."/>
            <person name="Mottagui-Tabar S."/>
            <person name="Mulder N."/>
            <person name="Nakano N."/>
            <person name="Nakauchi H."/>
            <person name="Ng P."/>
            <person name="Nilsson R."/>
            <person name="Nishiguchi S."/>
            <person name="Nishikawa S."/>
            <person name="Nori F."/>
            <person name="Ohara O."/>
            <person name="Okazaki Y."/>
            <person name="Orlando V."/>
            <person name="Pang K.C."/>
            <person name="Pavan W.J."/>
            <person name="Pavesi G."/>
            <person name="Pesole G."/>
            <person name="Petrovsky N."/>
            <person name="Piazza S."/>
            <person name="Reed J."/>
            <person name="Reid J.F."/>
            <person name="Ring B.Z."/>
            <person name="Ringwald M."/>
            <person name="Rost B."/>
            <person name="Ruan Y."/>
            <person name="Salzberg S.L."/>
            <person name="Sandelin A."/>
            <person name="Schneider C."/>
            <person name="Schoenbach C."/>
            <person name="Sekiguchi K."/>
            <person name="Semple C.A."/>
            <person name="Seno S."/>
            <person name="Sessa L."/>
            <person name="Sheng Y."/>
            <person name="Shibata Y."/>
            <person name="Shimada H."/>
            <person name="Shimada K."/>
            <person name="Silva D."/>
            <person name="Sinclair B."/>
            <person name="Sperling S."/>
            <person name="Stupka E."/>
            <person name="Sugiura K."/>
            <person name="Sultana R."/>
            <person name="Takenaka Y."/>
            <person name="Taki K."/>
            <person name="Tammoja K."/>
            <person name="Tan S.L."/>
            <person name="Tang S."/>
            <person name="Taylor M.S."/>
            <person name="Tegner J."/>
            <person name="Teichmann S.A."/>
            <person name="Ueda H.R."/>
            <person name="van Nimwegen E."/>
            <person name="Verardo R."/>
            <person name="Wei C.L."/>
            <person name="Yagi K."/>
            <person name="Yamanishi H."/>
            <person name="Zabarovsky E."/>
            <person name="Zhu S."/>
            <person name="Zimmer A."/>
            <person name="Hide W."/>
            <person name="Bult C."/>
            <person name="Grimmond S.M."/>
            <person name="Teasdale R.D."/>
            <person name="Liu E.T."/>
            <person name="Brusic V."/>
            <person name="Quackenbush J."/>
            <person name="Wahlestedt C."/>
            <person name="Mattick J.S."/>
            <person name="Hume D.A."/>
            <person name="Kai C."/>
            <person name="Sasaki D."/>
            <person name="Tomaru Y."/>
            <person name="Fukuda S."/>
            <person name="Kanamori-Katayama M."/>
            <person name="Suzuki M."/>
            <person name="Aoki J."/>
            <person name="Arakawa T."/>
            <person name="Iida J."/>
            <person name="Imamura K."/>
            <person name="Itoh M."/>
            <person name="Kato T."/>
            <person name="Kawaji H."/>
            <person name="Kawagashira N."/>
            <person name="Kawashima T."/>
            <person name="Kojima M."/>
            <person name="Kondo S."/>
            <person name="Konno H."/>
            <person name="Nakano K."/>
            <person name="Ninomiya N."/>
            <person name="Nishio T."/>
            <person name="Okada M."/>
            <person name="Plessy C."/>
            <person name="Shibata K."/>
            <person name="Shiraki T."/>
            <person name="Suzuki S."/>
            <person name="Tagami M."/>
            <person name="Waki K."/>
            <person name="Watahiki A."/>
            <person name="Okamura-Oho Y."/>
            <person name="Suzuki H."/>
            <person name="Kawai J."/>
            <person name="Hayashizaki Y."/>
        </authorList>
    </citation>
    <scope>NUCLEOTIDE SEQUENCE [LARGE SCALE MRNA] OF 202-1066</scope>
    <source>
        <strain>C57BL/6J</strain>
        <tissue>Testis</tissue>
    </source>
</reference>
<organism>
    <name type="scientific">Mus musculus</name>
    <name type="common">Mouse</name>
    <dbReference type="NCBI Taxonomy" id="10090"/>
    <lineage>
        <taxon>Eukaryota</taxon>
        <taxon>Metazoa</taxon>
        <taxon>Chordata</taxon>
        <taxon>Craniata</taxon>
        <taxon>Vertebrata</taxon>
        <taxon>Euteleostomi</taxon>
        <taxon>Mammalia</taxon>
        <taxon>Eutheria</taxon>
        <taxon>Euarchontoglires</taxon>
        <taxon>Glires</taxon>
        <taxon>Rodentia</taxon>
        <taxon>Myomorpha</taxon>
        <taxon>Muroidea</taxon>
        <taxon>Muridae</taxon>
        <taxon>Murinae</taxon>
        <taxon>Mus</taxon>
        <taxon>Mus</taxon>
    </lineage>
</organism>
<gene>
    <name type="primary">Ccdc73</name>
</gene>
<sequence length="1066" mass="120389">MEDSFNTTSSASTFTLQSSSETMVSIQLLDFRTSLLEALEELRMRRKAETQYEEQIAKIILETQELKWQKEALQNQKEALIKQHKEAMGVLKNQLQMKMYALEEEKGKYKLATEIKEKEIEGLKETLKTLQVSQYSLQKKVSEMEQKAHLYHLAKEDYHKQLNEIEKYYAAITNQFGLVRENHVKLEQNVQEAIQLNKRLSTLNEKQESEIHSLKKELKKAASELIKSKVTCQHKMEEESIDLIIKEQKYEELQERLNMELEVNKKINEEITHIQEEKQDIIISFQHMQQLLQQETQANTEIDAELKVLRENNQTLERDNELQREKVKENEEKFLSLEKEHERALGTWKKHVEELSGEMNVIKNELSSLRETHAKLQEHYNKLCEQKKTEEYKKFQNVPELNNENSDELTRKKSENIITQKYNSGPEIWGKNTKSFCLDTEYREEEKKDLPVGKTAEDLQPFEISAKSEINTMVSQDRNQSGMSPHRVLCLDKDATDQEQTSDVTDSRKSVTVEVKDKLCLEKASGCSEFKSLNNFFLVVDESLETEMVRLEGTEGLGLLHSGGDIPLDTRSNKASSNGMSNEMAHKRNYNTDGSESNPFKQQSKLLPADLENATEKEITNQDQTKAGLDSFLDIKLNLDPCKKHGLQDSSHVTLDVKHQKIKQMVREESQCSTEPRSCYQLASKAPQKPGGTIACAAVVSPLGPSASSDNKLTALKKSENSINTLPTAAKPAPSPAERTTRTNTNDIQNSSLRNHLGASESSVSVSDFQVNQGDSHTSQAKGLKTVVPLTTSSEKQPPSESQITETPKSGLSSLVDVTGRQCMWLNNRDKTEALNGILSGGTCHEGQLEEAHLSPATPSADSVSTSARSAFDLPSPDKPEKTPGYIKFVPLSPWPKVNQTKTVGTATPSIPLFLKEKTVDLSGSRVITPVTFCKNVVLDDTRKNIESDPTSNSRAADTMSNWSIHLDPKGQPREERNATAQTVYDSSFPTEHVKAEPLISTVQQSHSQTVKVTDSPDPLTFSPGNNDWQSLVMNRLTEIEKLLSLESDNQPKRRKVEEMLDNIID</sequence>
<dbReference type="EMBL" id="AL606494">
    <property type="protein sequence ID" value="CAM17232.1"/>
    <property type="molecule type" value="Genomic_DNA"/>
</dbReference>
<dbReference type="EMBL" id="BC095976">
    <property type="protein sequence ID" value="AAH95976.1"/>
    <property type="status" value="ALT_SEQ"/>
    <property type="molecule type" value="mRNA"/>
</dbReference>
<dbReference type="EMBL" id="AK029862">
    <property type="protein sequence ID" value="BAC26648.1"/>
    <property type="status" value="ALT_INIT"/>
    <property type="molecule type" value="mRNA"/>
</dbReference>
<dbReference type="CCDS" id="CCDS16494.2"/>
<dbReference type="RefSeq" id="NP_808268.2">
    <property type="nucleotide sequence ID" value="NM_177600.4"/>
</dbReference>
<dbReference type="SMR" id="Q8CDM4"/>
<dbReference type="BioGRID" id="229274">
    <property type="interactions" value="2"/>
</dbReference>
<dbReference type="FunCoup" id="Q8CDM4">
    <property type="interactions" value="3"/>
</dbReference>
<dbReference type="STRING" id="10090.ENSMUSP00000106743"/>
<dbReference type="GlyGen" id="Q8CDM4">
    <property type="glycosylation" value="1 site"/>
</dbReference>
<dbReference type="iPTMnet" id="Q8CDM4"/>
<dbReference type="PhosphoSitePlus" id="Q8CDM4"/>
<dbReference type="PaxDb" id="10090-ENSMUSP00000106743"/>
<dbReference type="ProteomicsDB" id="281316"/>
<dbReference type="Antibodypedia" id="49177">
    <property type="antibodies" value="13 antibodies from 7 providers"/>
</dbReference>
<dbReference type="DNASU" id="211936"/>
<dbReference type="Ensembl" id="ENSMUST00000111114.8">
    <property type="protein sequence ID" value="ENSMUSP00000106743.2"/>
    <property type="gene ID" value="ENSMUSG00000045106.13"/>
</dbReference>
<dbReference type="GeneID" id="211936"/>
<dbReference type="KEGG" id="mmu:211936"/>
<dbReference type="UCSC" id="uc008lkk.2">
    <property type="organism name" value="mouse"/>
</dbReference>
<dbReference type="AGR" id="MGI:3606488"/>
<dbReference type="CTD" id="493860"/>
<dbReference type="MGI" id="MGI:3606488">
    <property type="gene designation" value="Ccdc73"/>
</dbReference>
<dbReference type="VEuPathDB" id="HostDB:ENSMUSG00000045106"/>
<dbReference type="eggNOG" id="ENOG502QQG1">
    <property type="taxonomic scope" value="Eukaryota"/>
</dbReference>
<dbReference type="GeneTree" id="ENSGT00390000013482"/>
<dbReference type="HOGENOM" id="CLU_010526_0_0_1"/>
<dbReference type="InParanoid" id="Q8CDM4"/>
<dbReference type="OMA" id="HSFHIKP"/>
<dbReference type="OrthoDB" id="6145717at2759"/>
<dbReference type="PhylomeDB" id="Q8CDM4"/>
<dbReference type="TreeFam" id="TF335743"/>
<dbReference type="BioGRID-ORCS" id="211936">
    <property type="hits" value="1 hit in 76 CRISPR screens"/>
</dbReference>
<dbReference type="ChiTaRS" id="Ccdc73">
    <property type="organism name" value="mouse"/>
</dbReference>
<dbReference type="PRO" id="PR:Q8CDM4"/>
<dbReference type="Proteomes" id="UP000000589">
    <property type="component" value="Chromosome 2"/>
</dbReference>
<dbReference type="RNAct" id="Q8CDM4">
    <property type="molecule type" value="protein"/>
</dbReference>
<dbReference type="Bgee" id="ENSMUSG00000045106">
    <property type="expression patterns" value="Expressed in animal zygote and 77 other cell types or tissues"/>
</dbReference>
<dbReference type="ExpressionAtlas" id="Q8CDM4">
    <property type="expression patterns" value="baseline and differential"/>
</dbReference>
<dbReference type="InterPro" id="IPR031650">
    <property type="entry name" value="CCDC73"/>
</dbReference>
<dbReference type="PANTHER" id="PTHR28660">
    <property type="entry name" value="COILED-COIL DOMAIN-CONTAINING PROTEIN 73"/>
    <property type="match status" value="1"/>
</dbReference>
<dbReference type="PANTHER" id="PTHR28660:SF1">
    <property type="entry name" value="COILED-COIL DOMAIN-CONTAINING PROTEIN 73"/>
    <property type="match status" value="1"/>
</dbReference>
<dbReference type="Pfam" id="PF15818">
    <property type="entry name" value="CCDC73"/>
    <property type="match status" value="1"/>
</dbReference>
<protein>
    <recommendedName>
        <fullName>Coiled-coil domain-containing protein 73</fullName>
    </recommendedName>
</protein>